<sequence length="502" mass="56694">MRIGFDHEKYLEEQSKYILERVNNYDKLYLEFGGKLLFDLHAKRVLPGFDENAKIKLLHKLKEKVEIIICLYAGDIERNKIRGDFGITYDVDVLRLIDDLRGYDLEVNSVVITRYSGQPATNIFINKLERRGIKVYRHEATKGYPTDVDTIVSDEGYGKNPYIETTKPIVVVTAPGPGSGKLATCLSQLYHEYKRGNVAGYSKFETFPVWNVPLKHPLNIAYESATVDLKDVNMIDSFHFDAYNKVAVNYNRDIESFPVLKRIIEKITGEESVYKSPTDMGVNRVGFGIVDDEVVKEASKQEIIRRAFKTACEYKKGYVDKETFHRAKLIMEEMNLKEEDRKVVIPAREYAAKLKERANKSETCTVVALELEDGTILTGRSSELMDGTAAVILNAVKHYANISDEIHLISPVILEPIINLKAKTLGSKRTALSCEEVLIALSICAATNPTAQVAMGKLPMLKGCQAHSTTILSTNEEQTFRKLGIDVTCDPEYISESLYYNN</sequence>
<evidence type="ECO:0000255" key="1">
    <source>
        <dbReference type="HAMAP-Rule" id="MF_01567"/>
    </source>
</evidence>
<name>Y399_CLOBL</name>
<feature type="chain" id="PRO_1000069094" description="UPF0371 protein CLI_0399">
    <location>
        <begin position="1"/>
        <end position="502"/>
    </location>
</feature>
<protein>
    <recommendedName>
        <fullName evidence="1">UPF0371 protein CLI_0399</fullName>
    </recommendedName>
</protein>
<comment type="similarity">
    <text evidence="1">Belongs to the UPF0371 family.</text>
</comment>
<dbReference type="EMBL" id="CP000728">
    <property type="protein sequence ID" value="ABS42568.1"/>
    <property type="molecule type" value="Genomic_DNA"/>
</dbReference>
<dbReference type="RefSeq" id="WP_004451314.1">
    <property type="nucleotide sequence ID" value="NC_009699.1"/>
</dbReference>
<dbReference type="SMR" id="A7GA85"/>
<dbReference type="KEGG" id="cbf:CLI_0399"/>
<dbReference type="HOGENOM" id="CLU_046981_0_0_9"/>
<dbReference type="Proteomes" id="UP000002410">
    <property type="component" value="Chromosome"/>
</dbReference>
<dbReference type="Gene3D" id="1.20.1570.10">
    <property type="entry name" value="dip2346 domain like"/>
    <property type="match status" value="1"/>
</dbReference>
<dbReference type="Gene3D" id="3.10.630.10">
    <property type="entry name" value="dip2346 domain like"/>
    <property type="match status" value="1"/>
</dbReference>
<dbReference type="Gene3D" id="3.40.140.40">
    <property type="entry name" value="Domain of unknown function (DUF1846), C-terminal subdomain"/>
    <property type="match status" value="1"/>
</dbReference>
<dbReference type="HAMAP" id="MF_01567">
    <property type="entry name" value="UPF0371"/>
    <property type="match status" value="1"/>
</dbReference>
<dbReference type="InterPro" id="IPR014999">
    <property type="entry name" value="DUF1846"/>
</dbReference>
<dbReference type="InterPro" id="IPR048441">
    <property type="entry name" value="DUF1846_C"/>
</dbReference>
<dbReference type="InterPro" id="IPR048496">
    <property type="entry name" value="DUF1846_N"/>
</dbReference>
<dbReference type="NCBIfam" id="NF010184">
    <property type="entry name" value="PRK13663.1"/>
    <property type="match status" value="1"/>
</dbReference>
<dbReference type="Pfam" id="PF08903">
    <property type="entry name" value="DUF1846"/>
    <property type="match status" value="1"/>
</dbReference>
<dbReference type="Pfam" id="PF20921">
    <property type="entry name" value="DUF1846_C"/>
    <property type="match status" value="1"/>
</dbReference>
<dbReference type="PIRSF" id="PIRSF033132">
    <property type="entry name" value="DUF1846"/>
    <property type="match status" value="1"/>
</dbReference>
<accession>A7GA85</accession>
<organism>
    <name type="scientific">Clostridium botulinum (strain Langeland / NCTC 10281 / Type F)</name>
    <dbReference type="NCBI Taxonomy" id="441772"/>
    <lineage>
        <taxon>Bacteria</taxon>
        <taxon>Bacillati</taxon>
        <taxon>Bacillota</taxon>
        <taxon>Clostridia</taxon>
        <taxon>Eubacteriales</taxon>
        <taxon>Clostridiaceae</taxon>
        <taxon>Clostridium</taxon>
    </lineage>
</organism>
<reference key="1">
    <citation type="submission" date="2007-06" db="EMBL/GenBank/DDBJ databases">
        <authorList>
            <person name="Brinkac L.M."/>
            <person name="Daugherty S."/>
            <person name="Dodson R.J."/>
            <person name="Madupu R."/>
            <person name="Brown J.L."/>
            <person name="Bruce D."/>
            <person name="Detter C."/>
            <person name="Munk C."/>
            <person name="Smith L.A."/>
            <person name="Smith T.J."/>
            <person name="White O."/>
            <person name="Brettin T.S."/>
        </authorList>
    </citation>
    <scope>NUCLEOTIDE SEQUENCE [LARGE SCALE GENOMIC DNA]</scope>
    <source>
        <strain>Langeland / NCTC 10281 / Type F</strain>
    </source>
</reference>
<gene>
    <name type="ordered locus">CLI_0399</name>
</gene>
<proteinExistence type="inferred from homology"/>